<feature type="chain" id="PRO_1000071751" description="Uroporphyrinogen decarboxylase">
    <location>
        <begin position="1"/>
        <end position="354"/>
    </location>
</feature>
<feature type="binding site" evidence="1">
    <location>
        <begin position="27"/>
        <end position="31"/>
    </location>
    <ligand>
        <name>substrate</name>
    </ligand>
</feature>
<feature type="binding site" evidence="1">
    <location>
        <position position="77"/>
    </location>
    <ligand>
        <name>substrate</name>
    </ligand>
</feature>
<feature type="binding site" evidence="1">
    <location>
        <position position="154"/>
    </location>
    <ligand>
        <name>substrate</name>
    </ligand>
</feature>
<feature type="binding site" evidence="1">
    <location>
        <position position="209"/>
    </location>
    <ligand>
        <name>substrate</name>
    </ligand>
</feature>
<feature type="binding site" evidence="1">
    <location>
        <position position="327"/>
    </location>
    <ligand>
        <name>substrate</name>
    </ligand>
</feature>
<feature type="site" description="Transition state stabilizer" evidence="1">
    <location>
        <position position="77"/>
    </location>
</feature>
<protein>
    <recommendedName>
        <fullName evidence="1">Uroporphyrinogen decarboxylase</fullName>
        <shortName evidence="1">UPD</shortName>
        <shortName evidence="1">URO-D</shortName>
        <ecNumber evidence="1">4.1.1.37</ecNumber>
    </recommendedName>
</protein>
<accession>A6VQT2</accession>
<evidence type="ECO:0000255" key="1">
    <source>
        <dbReference type="HAMAP-Rule" id="MF_00218"/>
    </source>
</evidence>
<proteinExistence type="inferred from homology"/>
<sequence>MSQLKNDRYLRALLREPVDYTPVWMMRQAGRYLPEYKATRAQAGDFMSLCRNAELACEVTLQPLRRYDLDAAILFSDILTVPDAMGLGLSFGAGEGPKFARPVENAAMVENLPIPDPETELQYVMNAVRTIRRELQGEVPLIGFSGSPWTLATYMVEGGSSKAFTKIKKMMYADPQTLHKLLDKVSDAVILYLNAQIKAGAQAVMIFDTWGGVLAHRDYPDFSLQYMQKIVAGLIRENDGRKVPITLFTKGGGLWLEQIANSGCDAVGVDWTVNLAEAKAKIGHKVALQGNMDPSVLYARPARIRQEVRSILADFGNGSGHVFNLGHGIHQDVPVENPKIFVDAVHEYSKAYHK</sequence>
<comment type="function">
    <text evidence="1">Catalyzes the decarboxylation of four acetate groups of uroporphyrinogen-III to yield coproporphyrinogen-III.</text>
</comment>
<comment type="catalytic activity">
    <reaction evidence="1">
        <text>uroporphyrinogen III + 4 H(+) = coproporphyrinogen III + 4 CO2</text>
        <dbReference type="Rhea" id="RHEA:19865"/>
        <dbReference type="ChEBI" id="CHEBI:15378"/>
        <dbReference type="ChEBI" id="CHEBI:16526"/>
        <dbReference type="ChEBI" id="CHEBI:57308"/>
        <dbReference type="ChEBI" id="CHEBI:57309"/>
        <dbReference type="EC" id="4.1.1.37"/>
    </reaction>
</comment>
<comment type="pathway">
    <text evidence="1">Porphyrin-containing compound metabolism; protoporphyrin-IX biosynthesis; coproporphyrinogen-III from 5-aminolevulinate: step 4/4.</text>
</comment>
<comment type="subunit">
    <text evidence="1">Homodimer.</text>
</comment>
<comment type="subcellular location">
    <subcellularLocation>
        <location evidence="1">Cytoplasm</location>
    </subcellularLocation>
</comment>
<comment type="similarity">
    <text evidence="1">Belongs to the uroporphyrinogen decarboxylase family.</text>
</comment>
<name>DCUP_ACTSZ</name>
<organism>
    <name type="scientific">Actinobacillus succinogenes (strain ATCC 55618 / DSM 22257 / CCUG 43843 / 130Z)</name>
    <dbReference type="NCBI Taxonomy" id="339671"/>
    <lineage>
        <taxon>Bacteria</taxon>
        <taxon>Pseudomonadati</taxon>
        <taxon>Pseudomonadota</taxon>
        <taxon>Gammaproteobacteria</taxon>
        <taxon>Pasteurellales</taxon>
        <taxon>Pasteurellaceae</taxon>
        <taxon>Actinobacillus</taxon>
    </lineage>
</organism>
<reference key="1">
    <citation type="journal article" date="2010" name="BMC Genomics">
        <title>A genomic perspective on the potential of Actinobacillus succinogenes for industrial succinate production.</title>
        <authorList>
            <person name="McKinlay J.B."/>
            <person name="Laivenieks M."/>
            <person name="Schindler B.D."/>
            <person name="McKinlay A.A."/>
            <person name="Siddaramappa S."/>
            <person name="Challacombe J.F."/>
            <person name="Lowry S.R."/>
            <person name="Clum A."/>
            <person name="Lapidus A.L."/>
            <person name="Burkhart K.B."/>
            <person name="Harkins V."/>
            <person name="Vieille C."/>
        </authorList>
    </citation>
    <scope>NUCLEOTIDE SEQUENCE [LARGE SCALE GENOMIC DNA]</scope>
    <source>
        <strain>ATCC 55618 / DSM 22257 / CCUG 43843 / 130Z</strain>
    </source>
</reference>
<gene>
    <name evidence="1" type="primary">hemE</name>
    <name type="ordered locus">Asuc_1982</name>
</gene>
<keyword id="KW-0963">Cytoplasm</keyword>
<keyword id="KW-0210">Decarboxylase</keyword>
<keyword id="KW-0456">Lyase</keyword>
<keyword id="KW-0627">Porphyrin biosynthesis</keyword>
<keyword id="KW-1185">Reference proteome</keyword>
<dbReference type="EC" id="4.1.1.37" evidence="1"/>
<dbReference type="EMBL" id="CP000746">
    <property type="protein sequence ID" value="ABR75329.1"/>
    <property type="molecule type" value="Genomic_DNA"/>
</dbReference>
<dbReference type="RefSeq" id="WP_012073706.1">
    <property type="nucleotide sequence ID" value="NC_009655.1"/>
</dbReference>
<dbReference type="SMR" id="A6VQT2"/>
<dbReference type="STRING" id="339671.Asuc_1982"/>
<dbReference type="KEGG" id="asu:Asuc_1982"/>
<dbReference type="eggNOG" id="COG0407">
    <property type="taxonomic scope" value="Bacteria"/>
</dbReference>
<dbReference type="HOGENOM" id="CLU_040933_0_0_6"/>
<dbReference type="OrthoDB" id="9806656at2"/>
<dbReference type="UniPathway" id="UPA00251">
    <property type="reaction ID" value="UER00321"/>
</dbReference>
<dbReference type="Proteomes" id="UP000001114">
    <property type="component" value="Chromosome"/>
</dbReference>
<dbReference type="GO" id="GO:0005829">
    <property type="term" value="C:cytosol"/>
    <property type="evidence" value="ECO:0007669"/>
    <property type="project" value="TreeGrafter"/>
</dbReference>
<dbReference type="GO" id="GO:0004853">
    <property type="term" value="F:uroporphyrinogen decarboxylase activity"/>
    <property type="evidence" value="ECO:0007669"/>
    <property type="project" value="UniProtKB-UniRule"/>
</dbReference>
<dbReference type="GO" id="GO:0019353">
    <property type="term" value="P:protoporphyrinogen IX biosynthetic process from glutamate"/>
    <property type="evidence" value="ECO:0007669"/>
    <property type="project" value="TreeGrafter"/>
</dbReference>
<dbReference type="CDD" id="cd00717">
    <property type="entry name" value="URO-D"/>
    <property type="match status" value="1"/>
</dbReference>
<dbReference type="FunFam" id="3.20.20.210:FF:000001">
    <property type="entry name" value="Uroporphyrinogen decarboxylase"/>
    <property type="match status" value="1"/>
</dbReference>
<dbReference type="Gene3D" id="3.20.20.210">
    <property type="match status" value="1"/>
</dbReference>
<dbReference type="HAMAP" id="MF_00218">
    <property type="entry name" value="URO_D"/>
    <property type="match status" value="1"/>
</dbReference>
<dbReference type="InterPro" id="IPR038071">
    <property type="entry name" value="UROD/MetE-like_sf"/>
</dbReference>
<dbReference type="InterPro" id="IPR006361">
    <property type="entry name" value="Uroporphyrinogen_deCO2ase_HemE"/>
</dbReference>
<dbReference type="InterPro" id="IPR000257">
    <property type="entry name" value="Uroporphyrinogen_deCOase"/>
</dbReference>
<dbReference type="NCBIfam" id="TIGR01464">
    <property type="entry name" value="hemE"/>
    <property type="match status" value="1"/>
</dbReference>
<dbReference type="PANTHER" id="PTHR21091">
    <property type="entry name" value="METHYLTETRAHYDROFOLATE:HOMOCYSTEINE METHYLTRANSFERASE RELATED"/>
    <property type="match status" value="1"/>
</dbReference>
<dbReference type="PANTHER" id="PTHR21091:SF169">
    <property type="entry name" value="UROPORPHYRINOGEN DECARBOXYLASE"/>
    <property type="match status" value="1"/>
</dbReference>
<dbReference type="Pfam" id="PF01208">
    <property type="entry name" value="URO-D"/>
    <property type="match status" value="1"/>
</dbReference>
<dbReference type="SUPFAM" id="SSF51726">
    <property type="entry name" value="UROD/MetE-like"/>
    <property type="match status" value="1"/>
</dbReference>
<dbReference type="PROSITE" id="PS00906">
    <property type="entry name" value="UROD_1"/>
    <property type="match status" value="1"/>
</dbReference>
<dbReference type="PROSITE" id="PS00907">
    <property type="entry name" value="UROD_2"/>
    <property type="match status" value="1"/>
</dbReference>